<evidence type="ECO:0000250" key="1"/>
<evidence type="ECO:0000255" key="2"/>
<evidence type="ECO:0000269" key="3">
    <source>
    </source>
</evidence>
<evidence type="ECO:0000305" key="4"/>
<name>SPRN_BOVIN</name>
<dbReference type="EMBL" id="DQ531936">
    <property type="protein sequence ID" value="ABF85686.1"/>
    <property type="molecule type" value="mRNA"/>
</dbReference>
<dbReference type="EMBL" id="DQ058606">
    <property type="protein sequence ID" value="AAY83885.1"/>
    <property type="molecule type" value="Genomic_DNA"/>
</dbReference>
<dbReference type="EMBL" id="BC148119">
    <property type="protein sequence ID" value="AAI48120.1"/>
    <property type="molecule type" value="mRNA"/>
</dbReference>
<dbReference type="EMBL" id="BN000839">
    <property type="protein sequence ID" value="CAJ43799.1"/>
    <property type="molecule type" value="Genomic_DNA"/>
</dbReference>
<dbReference type="RefSeq" id="NP_001073790.1">
    <property type="nucleotide sequence ID" value="NM_001080321.1"/>
</dbReference>
<dbReference type="FunCoup" id="A0RZB4">
    <property type="interactions" value="14"/>
</dbReference>
<dbReference type="STRING" id="9913.ENSBTAP00000054072"/>
<dbReference type="GlyCosmos" id="A0RZB4">
    <property type="glycosylation" value="1 site, No reported glycans"/>
</dbReference>
<dbReference type="GlyGen" id="A0RZB4">
    <property type="glycosylation" value="1 site"/>
</dbReference>
<dbReference type="PaxDb" id="9913-ENSBTAP00000054072"/>
<dbReference type="GeneID" id="616266"/>
<dbReference type="KEGG" id="bta:616266"/>
<dbReference type="CTD" id="503542"/>
<dbReference type="VEuPathDB" id="HostDB:ENSBTAG00000047474"/>
<dbReference type="eggNOG" id="ENOG502SCEE">
    <property type="taxonomic scope" value="Eukaryota"/>
</dbReference>
<dbReference type="HOGENOM" id="CLU_1776846_0_0_1"/>
<dbReference type="InParanoid" id="A0RZB4"/>
<dbReference type="OMA" id="MNWAPAT"/>
<dbReference type="OrthoDB" id="9809656at2759"/>
<dbReference type="TreeFam" id="TF330766"/>
<dbReference type="Reactome" id="R-BTA-163125">
    <property type="pathway name" value="Post-translational modification: synthesis of GPI-anchored proteins"/>
</dbReference>
<dbReference type="Proteomes" id="UP000009136">
    <property type="component" value="Chromosome 26"/>
</dbReference>
<dbReference type="Bgee" id="ENSBTAG00000047474">
    <property type="expression patterns" value="Expressed in Ammon's horn and 45 other cell types or tissues"/>
</dbReference>
<dbReference type="GO" id="GO:0005634">
    <property type="term" value="C:nucleus"/>
    <property type="evidence" value="ECO:0000318"/>
    <property type="project" value="GO_Central"/>
</dbReference>
<dbReference type="GO" id="GO:0005886">
    <property type="term" value="C:plasma membrane"/>
    <property type="evidence" value="ECO:0007669"/>
    <property type="project" value="UniProtKB-SubCell"/>
</dbReference>
<dbReference type="GO" id="GO:0098552">
    <property type="term" value="C:side of membrane"/>
    <property type="evidence" value="ECO:0007669"/>
    <property type="project" value="UniProtKB-KW"/>
</dbReference>
<dbReference type="GO" id="GO:0003676">
    <property type="term" value="F:nucleic acid binding"/>
    <property type="evidence" value="ECO:0000318"/>
    <property type="project" value="GO_Central"/>
</dbReference>
<dbReference type="GO" id="GO:0006606">
    <property type="term" value="P:protein import into nucleus"/>
    <property type="evidence" value="ECO:0000318"/>
    <property type="project" value="GO_Central"/>
</dbReference>
<dbReference type="InterPro" id="IPR029238">
    <property type="entry name" value="Shadoo"/>
</dbReference>
<dbReference type="PANTHER" id="PTHR28552">
    <property type="entry name" value="SHADOW OF PRION PROTEIN"/>
    <property type="match status" value="1"/>
</dbReference>
<dbReference type="PANTHER" id="PTHR28552:SF1">
    <property type="entry name" value="SHADOW OF PRION PROTEIN"/>
    <property type="match status" value="1"/>
</dbReference>
<dbReference type="Pfam" id="PF14999">
    <property type="entry name" value="Shadoo"/>
    <property type="match status" value="1"/>
</dbReference>
<accession>A0RZB4</accession>
<comment type="function">
    <text evidence="1">Prion-like protein that has PrP(C)-like neuroprotective activity. May act as a modulator for the biological actions of normal and abnormal PrP (By similarity).</text>
</comment>
<comment type="subcellular location">
    <subcellularLocation>
        <location evidence="1">Cell membrane</location>
        <topology evidence="1">Lipid-anchor</topology>
        <topology evidence="1">GPI-anchor</topology>
    </subcellularLocation>
</comment>
<comment type="tissue specificity">
    <text evidence="3">Mainly expressed in brain.</text>
</comment>
<comment type="PTM">
    <text evidence="1">N-glycosylated.</text>
</comment>
<comment type="similarity">
    <text evidence="4">Belongs to the SPRN family.</text>
</comment>
<feature type="signal peptide" evidence="2">
    <location>
        <begin position="1"/>
        <end position="24"/>
    </location>
</feature>
<feature type="chain" id="PRO_0000320164" description="Shadow of prion protein">
    <location>
        <begin position="25"/>
        <end position="117"/>
    </location>
</feature>
<feature type="propeptide" id="PRO_0000320165" description="Removed in mature form" evidence="2">
    <location>
        <begin position="118"/>
        <end position="143"/>
    </location>
</feature>
<feature type="lipid moiety-binding region" description="GPI-anchor amidated serine" evidence="2">
    <location>
        <position position="117"/>
    </location>
</feature>
<feature type="glycosylation site" description="N-linked (GlcNAc...) asparagine" evidence="2">
    <location>
        <position position="103"/>
    </location>
</feature>
<proteinExistence type="evidence at transcript level"/>
<organism>
    <name type="scientific">Bos taurus</name>
    <name type="common">Bovine</name>
    <dbReference type="NCBI Taxonomy" id="9913"/>
    <lineage>
        <taxon>Eukaryota</taxon>
        <taxon>Metazoa</taxon>
        <taxon>Chordata</taxon>
        <taxon>Craniata</taxon>
        <taxon>Vertebrata</taxon>
        <taxon>Euteleostomi</taxon>
        <taxon>Mammalia</taxon>
        <taxon>Eutheria</taxon>
        <taxon>Laurasiatheria</taxon>
        <taxon>Artiodactyla</taxon>
        <taxon>Ruminantia</taxon>
        <taxon>Pecora</taxon>
        <taxon>Bovidae</taxon>
        <taxon>Bovinae</taxon>
        <taxon>Bos</taxon>
    </lineage>
</organism>
<gene>
    <name type="primary">SPRN</name>
</gene>
<protein>
    <recommendedName>
        <fullName>Shadow of prion protein</fullName>
        <shortName>Protein shadoo</shortName>
    </recommendedName>
</protein>
<reference key="1">
    <citation type="journal article" date="2006" name="Mamm. Genome">
        <title>Cloning of the bovine prion-like Shadoo (SPRN) gene by comparative analysis of the predicted genomic locus.</title>
        <authorList>
            <person name="Uboldi C."/>
            <person name="Paulis M."/>
            <person name="Guidi E."/>
            <person name="Bertoni A."/>
            <person name="Di Meo G.P."/>
            <person name="Perucatti A."/>
            <person name="Iannuzzi L."/>
            <person name="Raimondi E."/>
            <person name="Brunner R.M."/>
            <person name="Eggen A."/>
            <person name="Ferretti L."/>
        </authorList>
    </citation>
    <scope>NUCLEOTIDE SEQUENCE [GENOMIC DNA / MRNA]</scope>
    <scope>TISSUE SPECIFICITY</scope>
</reference>
<reference key="2">
    <citation type="submission" date="2007-06" db="EMBL/GenBank/DDBJ databases">
        <authorList>
            <consortium name="NIH - Mammalian Gene Collection (MGC) project"/>
        </authorList>
    </citation>
    <scope>NUCLEOTIDE SEQUENCE [LARGE SCALE MRNA]</scope>
    <source>
        <strain>Hereford</strain>
        <tissue>Fetal pons</tissue>
    </source>
</reference>
<reference key="3">
    <citation type="journal article" date="2007" name="BMC Genomics">
        <title>Comparative genomic analysis of prion genes.</title>
        <authorList>
            <person name="Premzl M."/>
            <person name="Gamulin V."/>
        </authorList>
    </citation>
    <scope>IDENTIFICATION</scope>
</reference>
<sequence length="143" mass="13982">MNWAAAVCWALLLAATFLCDGSAAKGGRGGARGSARGGRGAARVRVRPAPRYAGSSMRVAAGAAAGAAAGAAAGLAAGSSWRRAAGPAELGPEDAEDGAPGSNGTGRGVYSYWAWTSGTGPTGHRHLCPLLGGALGALRLLRP</sequence>
<keyword id="KW-0034">Amyloid</keyword>
<keyword id="KW-1003">Cell membrane</keyword>
<keyword id="KW-0325">Glycoprotein</keyword>
<keyword id="KW-0336">GPI-anchor</keyword>
<keyword id="KW-0449">Lipoprotein</keyword>
<keyword id="KW-0472">Membrane</keyword>
<keyword id="KW-0640">Prion</keyword>
<keyword id="KW-1185">Reference proteome</keyword>
<keyword id="KW-0732">Signal</keyword>